<protein>
    <recommendedName>
        <fullName evidence="3">Ferredoxin</fullName>
    </recommendedName>
</protein>
<evidence type="ECO:0000255" key="1">
    <source>
        <dbReference type="PROSITE-ProRule" id="PRU00711"/>
    </source>
</evidence>
<evidence type="ECO:0000269" key="2">
    <source>
    </source>
</evidence>
<evidence type="ECO:0000303" key="3">
    <source>
    </source>
</evidence>
<evidence type="ECO:0000305" key="4"/>
<evidence type="ECO:0000305" key="5">
    <source>
    </source>
</evidence>
<evidence type="ECO:0000312" key="6">
    <source>
        <dbReference type="EMBL" id="AAM04899.1"/>
    </source>
</evidence>
<accession>Q8TQQ5</accession>
<name>FER_METAC</name>
<dbReference type="EMBL" id="AE010299">
    <property type="protein sequence ID" value="AAM04899.1"/>
    <property type="molecule type" value="Genomic_DNA"/>
</dbReference>
<dbReference type="SMR" id="Q8TQQ5"/>
<dbReference type="STRING" id="188937.MA_1485"/>
<dbReference type="EnsemblBacteria" id="AAM04899">
    <property type="protein sequence ID" value="AAM04899"/>
    <property type="gene ID" value="MA_1485"/>
</dbReference>
<dbReference type="KEGG" id="mac:MA_1485"/>
<dbReference type="HOGENOM" id="CLU_2271015_0_0_2"/>
<dbReference type="InParanoid" id="Q8TQQ5"/>
<dbReference type="PhylomeDB" id="Q8TQQ5"/>
<dbReference type="UniPathway" id="UPA00940"/>
<dbReference type="Proteomes" id="UP000002487">
    <property type="component" value="Chromosome"/>
</dbReference>
<dbReference type="GO" id="GO:0051539">
    <property type="term" value="F:4 iron, 4 sulfur cluster binding"/>
    <property type="evidence" value="ECO:0007669"/>
    <property type="project" value="UniProtKB-KW"/>
</dbReference>
<dbReference type="GO" id="GO:0046872">
    <property type="term" value="F:metal ion binding"/>
    <property type="evidence" value="ECO:0007669"/>
    <property type="project" value="UniProtKB-KW"/>
</dbReference>
<dbReference type="GO" id="GO:0016491">
    <property type="term" value="F:oxidoreductase activity"/>
    <property type="evidence" value="ECO:0007669"/>
    <property type="project" value="UniProtKB-ARBA"/>
</dbReference>
<dbReference type="GO" id="GO:0006650">
    <property type="term" value="P:glycerophospholipid metabolic process"/>
    <property type="evidence" value="ECO:0007669"/>
    <property type="project" value="UniProtKB-UniPathway"/>
</dbReference>
<dbReference type="Gene3D" id="3.30.70.20">
    <property type="match status" value="2"/>
</dbReference>
<dbReference type="InterPro" id="IPR017896">
    <property type="entry name" value="4Fe4S_Fe-S-bd"/>
</dbReference>
<dbReference type="InterPro" id="IPR017900">
    <property type="entry name" value="4Fe4S_Fe_S_CS"/>
</dbReference>
<dbReference type="InterPro" id="IPR050572">
    <property type="entry name" value="Fe-S_Ferredoxin"/>
</dbReference>
<dbReference type="PANTHER" id="PTHR43687">
    <property type="entry name" value="ADENYLYLSULFATE REDUCTASE, BETA SUBUNIT"/>
    <property type="match status" value="1"/>
</dbReference>
<dbReference type="PANTHER" id="PTHR43687:SF6">
    <property type="entry name" value="L-ASPARTATE SEMIALDEHYDE SULFURTRANSFERASE IRON-SULFUR SUBUNIT"/>
    <property type="match status" value="1"/>
</dbReference>
<dbReference type="Pfam" id="PF00037">
    <property type="entry name" value="Fer4"/>
    <property type="match status" value="2"/>
</dbReference>
<dbReference type="SUPFAM" id="SSF54862">
    <property type="entry name" value="4Fe-4S ferredoxins"/>
    <property type="match status" value="1"/>
</dbReference>
<dbReference type="PROSITE" id="PS00198">
    <property type="entry name" value="4FE4S_FER_1"/>
    <property type="match status" value="2"/>
</dbReference>
<dbReference type="PROSITE" id="PS51379">
    <property type="entry name" value="4FE4S_FER_2"/>
    <property type="match status" value="2"/>
</dbReference>
<feature type="chain" id="PRO_0000450803" description="Ferredoxin">
    <location>
        <begin position="1"/>
        <end position="102"/>
    </location>
</feature>
<feature type="domain" description="4Fe-4S ferredoxin-type 1" evidence="1">
    <location>
        <begin position="45"/>
        <end position="73"/>
    </location>
</feature>
<feature type="domain" description="4Fe-4S ferredoxin-type 2" evidence="1">
    <location>
        <begin position="74"/>
        <end position="102"/>
    </location>
</feature>
<feature type="binding site" evidence="1">
    <location>
        <position position="54"/>
    </location>
    <ligand>
        <name>[4Fe-4S] cluster</name>
        <dbReference type="ChEBI" id="CHEBI:49883"/>
        <label>1</label>
    </ligand>
</feature>
<feature type="binding site" evidence="1">
    <location>
        <position position="57"/>
    </location>
    <ligand>
        <name>[4Fe-4S] cluster</name>
        <dbReference type="ChEBI" id="CHEBI:49883"/>
        <label>1</label>
    </ligand>
</feature>
<feature type="binding site" evidence="1">
    <location>
        <position position="60"/>
    </location>
    <ligand>
        <name>[4Fe-4S] cluster</name>
        <dbReference type="ChEBI" id="CHEBI:49883"/>
        <label>1</label>
    </ligand>
</feature>
<feature type="binding site" evidence="1">
    <location>
        <position position="64"/>
    </location>
    <ligand>
        <name>[4Fe-4S] cluster</name>
        <dbReference type="ChEBI" id="CHEBI:49883"/>
        <label>2</label>
    </ligand>
</feature>
<feature type="binding site" evidence="1">
    <location>
        <position position="83"/>
    </location>
    <ligand>
        <name>[4Fe-4S] cluster</name>
        <dbReference type="ChEBI" id="CHEBI:49883"/>
        <label>2</label>
    </ligand>
</feature>
<feature type="binding site" evidence="1">
    <location>
        <position position="86"/>
    </location>
    <ligand>
        <name>[4Fe-4S] cluster</name>
        <dbReference type="ChEBI" id="CHEBI:49883"/>
        <label>2</label>
    </ligand>
</feature>
<feature type="binding site" evidence="1">
    <location>
        <position position="89"/>
    </location>
    <ligand>
        <name>[4Fe-4S] cluster</name>
        <dbReference type="ChEBI" id="CHEBI:49883"/>
        <label>2</label>
    </ligand>
</feature>
<feature type="binding site" evidence="1">
    <location>
        <position position="93"/>
    </location>
    <ligand>
        <name>[4Fe-4S] cluster</name>
        <dbReference type="ChEBI" id="CHEBI:49883"/>
        <label>1</label>
    </ligand>
</feature>
<reference key="1">
    <citation type="journal article" date="2002" name="Genome Res.">
        <title>The genome of Methanosarcina acetivorans reveals extensive metabolic and physiological diversity.</title>
        <authorList>
            <person name="Galagan J.E."/>
            <person name="Nusbaum C."/>
            <person name="Roy A."/>
            <person name="Endrizzi M.G."/>
            <person name="Macdonald P."/>
            <person name="FitzHugh W."/>
            <person name="Calvo S."/>
            <person name="Engels R."/>
            <person name="Smirnov S."/>
            <person name="Atnoor D."/>
            <person name="Brown A."/>
            <person name="Allen N."/>
            <person name="Naylor J."/>
            <person name="Stange-Thomann N."/>
            <person name="DeArellano K."/>
            <person name="Johnson R."/>
            <person name="Linton L."/>
            <person name="McEwan P."/>
            <person name="McKernan K."/>
            <person name="Talamas J."/>
            <person name="Tirrell A."/>
            <person name="Ye W."/>
            <person name="Zimmer A."/>
            <person name="Barber R.D."/>
            <person name="Cann I."/>
            <person name="Graham D.E."/>
            <person name="Grahame D.A."/>
            <person name="Guss A.M."/>
            <person name="Hedderich R."/>
            <person name="Ingram-Smith C."/>
            <person name="Kuettner H.C."/>
            <person name="Krzycki J.A."/>
            <person name="Leigh J.A."/>
            <person name="Li W."/>
            <person name="Liu J."/>
            <person name="Mukhopadhyay B."/>
            <person name="Reeve J.N."/>
            <person name="Smith K."/>
            <person name="Springer T.A."/>
            <person name="Umayam L.A."/>
            <person name="White O."/>
            <person name="White R.H."/>
            <person name="de Macario E.C."/>
            <person name="Ferry J.G."/>
            <person name="Jarrell K.F."/>
            <person name="Jing H."/>
            <person name="Macario A.J.L."/>
            <person name="Paulsen I.T."/>
            <person name="Pritchett M."/>
            <person name="Sowers K.R."/>
            <person name="Swanson R.V."/>
            <person name="Zinder S.H."/>
            <person name="Lander E."/>
            <person name="Metcalf W.W."/>
            <person name="Birren B."/>
        </authorList>
    </citation>
    <scope>NUCLEOTIDE SEQUENCE [LARGE SCALE GENOMIC DNA]</scope>
    <source>
        <strain>ATCC 35395 / DSM 2834 / JCM 12185 / C2A</strain>
    </source>
</reference>
<reference key="2">
    <citation type="journal article" date="2014" name="J. Bacteriol.">
        <title>Geranylgeranyl reductase and ferredoxin from Methanosarcina acetivorans are required for the synthesis of fully reduced archaeal membrane lipid in Escherichia coli cells.</title>
        <authorList>
            <person name="Isobe K."/>
            <person name="Ogawa T."/>
            <person name="Hirose K."/>
            <person name="Yokoi T."/>
            <person name="Yoshimura T."/>
            <person name="Hemmi H."/>
        </authorList>
    </citation>
    <scope>FUNCTION</scope>
    <scope>COFACTOR</scope>
    <scope>PATHWAY</scope>
</reference>
<gene>
    <name evidence="6" type="ordered locus">MA_1485</name>
</gene>
<proteinExistence type="predicted"/>
<comment type="function">
    <text evidence="2">Ferredoxin that is the specific electron donor for the geranylgeranyl reductase GGR involved in the biosynthesis of archaeal membrane lipids.</text>
</comment>
<comment type="cofactor">
    <cofactor evidence="5">
        <name>[4Fe-4S] cluster</name>
        <dbReference type="ChEBI" id="CHEBI:49883"/>
    </cofactor>
    <text evidence="5">Binds 2 [4Fe-4S] clusters.</text>
</comment>
<comment type="pathway">
    <text evidence="5">Membrane lipid metabolism; glycerophospholipid metabolism.</text>
</comment>
<comment type="miscellaneous">
    <text evidence="4">This ferredoxin is encoded just downstream from the GGR gene in the genome of M.acetivorans.</text>
</comment>
<sequence length="102" mass="11624">MVWHYTNDVALYCRAFRSMPHCLRERQYFMVKDHDLLLKLTGELVSVNINRYKCGYCGACVGVCPKGALELVETWIEVDESTCIKCGICDRICPVGAIEVMK</sequence>
<keyword id="KW-0004">4Fe-4S</keyword>
<keyword id="KW-0249">Electron transport</keyword>
<keyword id="KW-0408">Iron</keyword>
<keyword id="KW-0411">Iron-sulfur</keyword>
<keyword id="KW-0479">Metal-binding</keyword>
<keyword id="KW-1185">Reference proteome</keyword>
<keyword id="KW-0677">Repeat</keyword>
<keyword id="KW-0813">Transport</keyword>
<organism>
    <name type="scientific">Methanosarcina acetivorans (strain ATCC 35395 / DSM 2834 / JCM 12185 / C2A)</name>
    <dbReference type="NCBI Taxonomy" id="188937"/>
    <lineage>
        <taxon>Archaea</taxon>
        <taxon>Methanobacteriati</taxon>
        <taxon>Methanobacteriota</taxon>
        <taxon>Stenosarchaea group</taxon>
        <taxon>Methanomicrobia</taxon>
        <taxon>Methanosarcinales</taxon>
        <taxon>Methanosarcinaceae</taxon>
        <taxon>Methanosarcina</taxon>
    </lineage>
</organism>